<protein>
    <recommendedName>
        <fullName>ATP-dependent Clp protease proteolytic subunit 1, mitochondrial</fullName>
        <ecNumber>3.4.21.92</ecNumber>
    </recommendedName>
    <alternativeName>
        <fullName>Endopeptidase Clp</fullName>
    </alternativeName>
</protein>
<feature type="transit peptide" description="Mitochondrion" evidence="1">
    <location>
        <begin position="1"/>
        <end position="25"/>
    </location>
</feature>
<feature type="chain" id="PRO_0000179762" description="ATP-dependent Clp protease proteolytic subunit 1, mitochondrial">
    <location>
        <begin position="26"/>
        <end position="221"/>
    </location>
</feature>
<feature type="active site" description="Nucleophile" evidence="4">
    <location>
        <position position="120"/>
    </location>
</feature>
<feature type="active site" evidence="4">
    <location>
        <position position="145"/>
    </location>
</feature>
<feature type="splice variant" id="VSP_039409" description="In isoform b." evidence="4">
    <location>
        <begin position="1"/>
        <end position="104"/>
    </location>
</feature>
<feature type="splice variant" id="VSP_044103" description="In isoform a." evidence="4">
    <location>
        <begin position="1"/>
        <end position="15"/>
    </location>
</feature>
<evidence type="ECO:0000250" key="1"/>
<evidence type="ECO:0000269" key="2">
    <source>
    </source>
</evidence>
<evidence type="ECO:0000269" key="3">
    <source>
    </source>
</evidence>
<evidence type="ECO:0000305" key="4"/>
<name>CLPP1_CAEEL</name>
<proteinExistence type="evidence at protein level"/>
<reference key="1">
    <citation type="journal article" date="1998" name="Science">
        <title>Genome sequence of the nematode C. elegans: a platform for investigating biology.</title>
        <authorList>
            <consortium name="The C. elegans sequencing consortium"/>
        </authorList>
    </citation>
    <scope>NUCLEOTIDE SEQUENCE [LARGE SCALE GENOMIC DNA]</scope>
    <scope>ALTERNATIVE SPLICING</scope>
    <source>
        <strain>Bristol N2</strain>
    </source>
</reference>
<reference key="2">
    <citation type="journal article" date="2006" name="Development">
        <title>Chromosomal clustering and GATA transcriptional regulation of intestine-expressed genes in C. elegans.</title>
        <authorList>
            <person name="Pauli F."/>
            <person name="Liu Y."/>
            <person name="Kim Y.A."/>
            <person name="Chen P.J."/>
            <person name="Kim S.K."/>
        </authorList>
    </citation>
    <scope>TISSUE SPECIFICITY</scope>
</reference>
<reference key="3">
    <citation type="journal article" date="2007" name="Dev. Cell">
        <title>ClpP mediates activation of a mitochondrial unfolded protein response in C. elegans.</title>
        <authorList>
            <person name="Haynes C.M."/>
            <person name="Petrova K."/>
            <person name="Benedetti C."/>
            <person name="Yang Y."/>
            <person name="Ron D."/>
        </authorList>
    </citation>
    <scope>FUNCTION</scope>
    <scope>SUBUNIT</scope>
    <scope>SUBCELLULAR LOCATION</scope>
</reference>
<sequence length="221" mass="24266">MLRRLVTSSLSASRSMSASVQSRVGIPFVIDNEGKGERTYDIYSRLLRDRIVCLMTPVDDFIASALIAQLLFLQSESGKKPIHMYINSPGGSVTAGLAIYDTIQMISAPVSTWVIGQASSMGSLLLCAGEKGMRSALPNSRIMVHQPSGGAQGTCSDIVIRAEEITRLKRRLNEIYVHHTGMSYDEIEKTLDRDRFMSAHEALKFGLVDQIETHNGSMPSD</sequence>
<comment type="function">
    <text evidence="3">Clp cleaves peptides in various proteins in a process that requires ATP hydrolysis. Clp may be responsible for a fairly general and central housekeeping function rather than for the degradation of specific substrates.</text>
</comment>
<comment type="catalytic activity">
    <reaction>
        <text>Hydrolysis of proteins to small peptides in the presence of ATP and magnesium. alpha-casein is the usual test substrate. In the absence of ATP, only oligopeptides shorter than five residues are hydrolyzed (such as succinyl-Leu-Tyr-|-NHMec, and Leu-Tyr-Leu-|-Tyr-Trp, in which cleavage of the -Tyr-|-Leu- and -Tyr-|-Trp bonds also occurs).</text>
        <dbReference type="EC" id="3.4.21.92"/>
    </reaction>
</comment>
<comment type="subunit">
    <text evidence="3">Tetradecamer that assembles into a two heptameric rings with a central cavity.</text>
</comment>
<comment type="subcellular location">
    <subcellularLocation>
        <location evidence="3">Mitochondrion matrix</location>
    </subcellularLocation>
</comment>
<comment type="alternative products">
    <event type="alternative splicing"/>
    <isoform>
        <id>Q27539-1</id>
        <name>d</name>
        <sequence type="displayed"/>
    </isoform>
    <isoform>
        <id>Q27539-2</id>
        <name>b</name>
        <sequence type="described" ref="VSP_039409"/>
    </isoform>
    <isoform>
        <id>Q27539-3</id>
        <name>a</name>
        <sequence type="described" ref="VSP_044103"/>
    </isoform>
</comment>
<comment type="tissue specificity">
    <text evidence="2">Expressed in the intestine.</text>
</comment>
<comment type="similarity">
    <text evidence="4">Belongs to the peptidase S14 family.</text>
</comment>
<gene>
    <name type="primary">clpp-1</name>
    <name type="ORF">ZK970.2</name>
</gene>
<keyword id="KW-0025">Alternative splicing</keyword>
<keyword id="KW-0378">Hydrolase</keyword>
<keyword id="KW-0496">Mitochondrion</keyword>
<keyword id="KW-0645">Protease</keyword>
<keyword id="KW-1185">Reference proteome</keyword>
<keyword id="KW-0720">Serine protease</keyword>
<keyword id="KW-0809">Transit peptide</keyword>
<organism>
    <name type="scientific">Caenorhabditis elegans</name>
    <dbReference type="NCBI Taxonomy" id="6239"/>
    <lineage>
        <taxon>Eukaryota</taxon>
        <taxon>Metazoa</taxon>
        <taxon>Ecdysozoa</taxon>
        <taxon>Nematoda</taxon>
        <taxon>Chromadorea</taxon>
        <taxon>Rhabditida</taxon>
        <taxon>Rhabditina</taxon>
        <taxon>Rhabditomorpha</taxon>
        <taxon>Rhabditoidea</taxon>
        <taxon>Rhabditidae</taxon>
        <taxon>Peloderinae</taxon>
        <taxon>Caenorhabditis</taxon>
    </lineage>
</organism>
<dbReference type="EC" id="3.4.21.92"/>
<dbReference type="EMBL" id="Z49073">
    <property type="protein sequence ID" value="CAA88886.1"/>
    <property type="molecule type" value="Genomic_DNA"/>
</dbReference>
<dbReference type="EMBL" id="Z49073">
    <property type="protein sequence ID" value="CAR97864.1"/>
    <property type="molecule type" value="Genomic_DNA"/>
</dbReference>
<dbReference type="EMBL" id="Z49073">
    <property type="protein sequence ID" value="CCF23347.1"/>
    <property type="molecule type" value="Genomic_DNA"/>
</dbReference>
<dbReference type="PIR" id="C88288">
    <property type="entry name" value="C88288"/>
</dbReference>
<dbReference type="RefSeq" id="NP_001254239.1">
    <molecule id="Q27539-1"/>
    <property type="nucleotide sequence ID" value="NM_001267310.5"/>
</dbReference>
<dbReference type="RefSeq" id="NP_001254240.1">
    <molecule id="Q27539-3"/>
    <property type="nucleotide sequence ID" value="NM_001267311.3"/>
</dbReference>
<dbReference type="RefSeq" id="NP_001254241.1">
    <molecule id="Q27539-2"/>
    <property type="nucleotide sequence ID" value="NM_001267312.3"/>
</dbReference>
<dbReference type="SMR" id="Q27539"/>
<dbReference type="BioGRID" id="39913">
    <property type="interactions" value="4"/>
</dbReference>
<dbReference type="FunCoup" id="Q27539">
    <property type="interactions" value="2308"/>
</dbReference>
<dbReference type="STRING" id="6239.ZK970.2d.1"/>
<dbReference type="MEROPS" id="S14.A04"/>
<dbReference type="PaxDb" id="6239-ZK970.2d"/>
<dbReference type="PeptideAtlas" id="Q27539"/>
<dbReference type="EnsemblMetazoa" id="ZK970.2a.1">
    <molecule id="Q27539-3"/>
    <property type="protein sequence ID" value="ZK970.2a.1"/>
    <property type="gene ID" value="WBGene00014172"/>
</dbReference>
<dbReference type="EnsemblMetazoa" id="ZK970.2b.1">
    <molecule id="Q27539-2"/>
    <property type="protein sequence ID" value="ZK970.2b.1"/>
    <property type="gene ID" value="WBGene00014172"/>
</dbReference>
<dbReference type="EnsemblMetazoa" id="ZK970.2d.1">
    <molecule id="Q27539-1"/>
    <property type="protein sequence ID" value="ZK970.2d.1"/>
    <property type="gene ID" value="WBGene00014172"/>
</dbReference>
<dbReference type="GeneID" id="174594"/>
<dbReference type="KEGG" id="cel:CELE_ZK970.2"/>
<dbReference type="AGR" id="WB:WBGene00014172"/>
<dbReference type="CTD" id="174594"/>
<dbReference type="WormBase" id="ZK970.2a">
    <molecule id="Q27539-3"/>
    <property type="protein sequence ID" value="CE02402"/>
    <property type="gene ID" value="WBGene00014172"/>
    <property type="gene designation" value="clpp-1"/>
</dbReference>
<dbReference type="WormBase" id="ZK970.2b">
    <molecule id="Q27539-2"/>
    <property type="protein sequence ID" value="CE43229"/>
    <property type="gene ID" value="WBGene00014172"/>
    <property type="gene designation" value="clpp-1"/>
</dbReference>
<dbReference type="WormBase" id="ZK970.2d">
    <molecule id="Q27539-1"/>
    <property type="protein sequence ID" value="CE47044"/>
    <property type="gene ID" value="WBGene00014172"/>
    <property type="gene designation" value="clpp-1"/>
</dbReference>
<dbReference type="eggNOG" id="KOG0840">
    <property type="taxonomic scope" value="Eukaryota"/>
</dbReference>
<dbReference type="GeneTree" id="ENSGT00390000005830"/>
<dbReference type="InParanoid" id="Q27539"/>
<dbReference type="OMA" id="RDYWMKA"/>
<dbReference type="OrthoDB" id="2017408at2759"/>
<dbReference type="PhylomeDB" id="Q27539"/>
<dbReference type="BRENDA" id="3.4.21.92">
    <property type="organism ID" value="1045"/>
</dbReference>
<dbReference type="Reactome" id="R-CEL-9837999">
    <property type="pathway name" value="Mitochondrial protein degradation"/>
</dbReference>
<dbReference type="PRO" id="PR:Q27539"/>
<dbReference type="Proteomes" id="UP000001940">
    <property type="component" value="Chromosome II"/>
</dbReference>
<dbReference type="Bgee" id="WBGene00014172">
    <property type="expression patterns" value="Expressed in germ line (C elegans) and 4 other cell types or tissues"/>
</dbReference>
<dbReference type="GO" id="GO:0009368">
    <property type="term" value="C:endopeptidase Clp complex"/>
    <property type="evidence" value="ECO:0000318"/>
    <property type="project" value="GO_Central"/>
</dbReference>
<dbReference type="GO" id="GO:0005759">
    <property type="term" value="C:mitochondrial matrix"/>
    <property type="evidence" value="ECO:0000314"/>
    <property type="project" value="WormBase"/>
</dbReference>
<dbReference type="GO" id="GO:0004176">
    <property type="term" value="F:ATP-dependent peptidase activity"/>
    <property type="evidence" value="ECO:0000318"/>
    <property type="project" value="GO_Central"/>
</dbReference>
<dbReference type="GO" id="GO:0051117">
    <property type="term" value="F:ATPase binding"/>
    <property type="evidence" value="ECO:0000318"/>
    <property type="project" value="GO_Central"/>
</dbReference>
<dbReference type="GO" id="GO:0004252">
    <property type="term" value="F:serine-type endopeptidase activity"/>
    <property type="evidence" value="ECO:0000314"/>
    <property type="project" value="WormBase"/>
</dbReference>
<dbReference type="GO" id="GO:0034514">
    <property type="term" value="P:mitochondrial unfolded protein response"/>
    <property type="evidence" value="ECO:0000315"/>
    <property type="project" value="WormBase"/>
</dbReference>
<dbReference type="GO" id="GO:0006515">
    <property type="term" value="P:protein quality control for misfolded or incompletely synthesized proteins"/>
    <property type="evidence" value="ECO:0000318"/>
    <property type="project" value="GO_Central"/>
</dbReference>
<dbReference type="GO" id="GO:0006508">
    <property type="term" value="P:proteolysis"/>
    <property type="evidence" value="ECO:0000314"/>
    <property type="project" value="WormBase"/>
</dbReference>
<dbReference type="CDD" id="cd07017">
    <property type="entry name" value="S14_ClpP_2"/>
    <property type="match status" value="1"/>
</dbReference>
<dbReference type="FunFam" id="3.90.226.10:FF:000001">
    <property type="entry name" value="ATP-dependent Clp protease proteolytic subunit"/>
    <property type="match status" value="1"/>
</dbReference>
<dbReference type="Gene3D" id="3.90.226.10">
    <property type="entry name" value="2-enoyl-CoA Hydratase, Chain A, domain 1"/>
    <property type="match status" value="1"/>
</dbReference>
<dbReference type="HAMAP" id="MF_00444">
    <property type="entry name" value="ClpP"/>
    <property type="match status" value="1"/>
</dbReference>
<dbReference type="InterPro" id="IPR001907">
    <property type="entry name" value="ClpP"/>
</dbReference>
<dbReference type="InterPro" id="IPR029045">
    <property type="entry name" value="ClpP/crotonase-like_dom_sf"/>
</dbReference>
<dbReference type="InterPro" id="IPR023562">
    <property type="entry name" value="ClpP/TepA"/>
</dbReference>
<dbReference type="InterPro" id="IPR033135">
    <property type="entry name" value="ClpP_His_AS"/>
</dbReference>
<dbReference type="InterPro" id="IPR018215">
    <property type="entry name" value="ClpP_Ser_AS"/>
</dbReference>
<dbReference type="NCBIfam" id="NF001368">
    <property type="entry name" value="PRK00277.1"/>
    <property type="match status" value="1"/>
</dbReference>
<dbReference type="NCBIfam" id="NF009205">
    <property type="entry name" value="PRK12553.1"/>
    <property type="match status" value="1"/>
</dbReference>
<dbReference type="PANTHER" id="PTHR10381">
    <property type="entry name" value="ATP-DEPENDENT CLP PROTEASE PROTEOLYTIC SUBUNIT"/>
    <property type="match status" value="1"/>
</dbReference>
<dbReference type="PANTHER" id="PTHR10381:SF11">
    <property type="entry name" value="ATP-DEPENDENT CLP PROTEASE PROTEOLYTIC SUBUNIT, MITOCHONDRIAL"/>
    <property type="match status" value="1"/>
</dbReference>
<dbReference type="Pfam" id="PF00574">
    <property type="entry name" value="CLP_protease"/>
    <property type="match status" value="1"/>
</dbReference>
<dbReference type="PRINTS" id="PR00127">
    <property type="entry name" value="CLPPROTEASEP"/>
</dbReference>
<dbReference type="SUPFAM" id="SSF52096">
    <property type="entry name" value="ClpP/crotonase"/>
    <property type="match status" value="1"/>
</dbReference>
<dbReference type="PROSITE" id="PS00382">
    <property type="entry name" value="CLP_PROTEASE_HIS"/>
    <property type="match status" value="1"/>
</dbReference>
<dbReference type="PROSITE" id="PS00381">
    <property type="entry name" value="CLP_PROTEASE_SER"/>
    <property type="match status" value="1"/>
</dbReference>
<accession>Q27539</accession>
<accession>B6VQ47</accession>
<accession>H2FLG3</accession>